<gene>
    <name type="primary">hacA</name>
    <name type="ORF">AO090124000074</name>
</gene>
<organism>
    <name type="scientific">Aspergillus oryzae (strain ATCC 42149 / RIB 40)</name>
    <name type="common">Yellow koji mold</name>
    <dbReference type="NCBI Taxonomy" id="510516"/>
    <lineage>
        <taxon>Eukaryota</taxon>
        <taxon>Fungi</taxon>
        <taxon>Dikarya</taxon>
        <taxon>Ascomycota</taxon>
        <taxon>Pezizomycotina</taxon>
        <taxon>Eurotiomycetes</taxon>
        <taxon>Eurotiomycetidae</taxon>
        <taxon>Eurotiales</taxon>
        <taxon>Aspergillaceae</taxon>
        <taxon>Aspergillus</taxon>
        <taxon>Aspergillus subgen. Circumdati</taxon>
    </lineage>
</organism>
<protein>
    <recommendedName>
        <fullName>Transcriptional activator hacA</fullName>
    </recommendedName>
</protein>
<feature type="chain" id="PRO_0000252295" description="Transcriptional activator hacA">
    <location>
        <begin position="1"/>
        <end position="345"/>
    </location>
</feature>
<feature type="domain" description="bZIP" evidence="2">
    <location>
        <begin position="83"/>
        <end position="146"/>
    </location>
</feature>
<feature type="region of interest" description="Disordered" evidence="3">
    <location>
        <begin position="1"/>
        <end position="106"/>
    </location>
</feature>
<feature type="region of interest" description="Basic motif" evidence="2">
    <location>
        <begin position="85"/>
        <end position="138"/>
    </location>
</feature>
<feature type="region of interest" description="Leucine-zipper" evidence="2">
    <location>
        <begin position="139"/>
        <end position="146"/>
    </location>
</feature>
<feature type="region of interest" description="Disordered" evidence="3">
    <location>
        <begin position="186"/>
        <end position="210"/>
    </location>
</feature>
<feature type="compositionally biased region" description="Polar residues" evidence="3">
    <location>
        <begin position="30"/>
        <end position="40"/>
    </location>
</feature>
<feature type="compositionally biased region" description="Basic and acidic residues" evidence="3">
    <location>
        <begin position="41"/>
        <end position="51"/>
    </location>
</feature>
<feature type="compositionally biased region" description="Basic and acidic residues" evidence="3">
    <location>
        <begin position="77"/>
        <end position="91"/>
    </location>
</feature>
<feature type="compositionally biased region" description="Polar residues" evidence="3">
    <location>
        <begin position="192"/>
        <end position="210"/>
    </location>
</feature>
<feature type="splice variant" id="VSP_020902" description="In isoform U." evidence="4">
    <original>VSVAGLEGDGSALPLFDLGSDLKHHSTDDVAAPLSDDDFNRLFHGDSSVEPDSSVFEDGLAFDVLEGGDLSAFPFDSMVNFDSEPVTLEGIEMAHGLPDETTCKTSSVQPGFGASTTRCDGQGIAAGC</original>
    <variation>AVLCDLQCPSLDSKEMEAPSHFSTSAQTLNITLQMTLQLLFLTMTSTAYSTVIHPLNQILLSLKTGLPLMFSKEEIYQHFHLILWLISTPSLSPSKASRWPTGFRMRLLARLLACNPALARPLRDATGRALQLAVSENFSQGSMSVTDTQRSRWSWESLLTLSWAIDRLENPRRRRRILHGLRTSQIDRRNNLGKRQRSIRSTWSSNNTETLTSPLTGKDC</variation>
    <location>
        <begin position="218"/>
        <end position="345"/>
    </location>
</feature>
<proteinExistence type="evidence at transcript level"/>
<comment type="function">
    <text evidence="1">Transcriptional activator involved in the unfolded protein response (UPR) pathway. Recognizes and binds to the UPR element (UPRE) in the promoter of UPR-regulated genes. Increases the synthesis of endoplasmic reticulum-resident proteins required for protein folding as well as components of the secretory pathway (By similarity).</text>
</comment>
<comment type="subunit">
    <text evidence="1">Homodimer.</text>
</comment>
<comment type="subcellular location">
    <subcellularLocation>
        <location evidence="4">Nucleus</location>
    </subcellularLocation>
</comment>
<comment type="alternative products">
    <event type="alternative splicing"/>
    <isoform>
        <id>Q1XGE2-1</id>
        <name>I</name>
        <name>Induced</name>
        <sequence type="displayed"/>
    </isoform>
    <isoform>
        <id>Q1XGE2-2</id>
        <name>U</name>
        <name>Uninduced</name>
        <sequence type="described" ref="VSP_020902"/>
    </isoform>
    <text>Splicing occurs by a non-spliceosomal, regulated splicing mechanism when UPR is induced.</text>
</comment>
<comment type="induction">
    <text>By the unfolded protein response pathway. Accumulation of unfolded proteins in the ER leads to splicing of the hacA precursor mRNA to produce the mature form.</text>
</comment>
<comment type="miscellaneous">
    <molecule>Isoform I</molecule>
    <text>Induced and active isoform.</text>
</comment>
<comment type="miscellaneous">
    <molecule>Isoform U</molecule>
    <text evidence="4">Probably not translated.</text>
</comment>
<comment type="similarity">
    <text evidence="4">Belongs to the bZIP family.</text>
</comment>
<comment type="sequence caution" evidence="4">
    <conflict type="erroneous gene model prediction">
        <sequence resource="EMBL-CDS" id="BAE62622"/>
    </conflict>
</comment>
<evidence type="ECO:0000250" key="1"/>
<evidence type="ECO:0000255" key="2">
    <source>
        <dbReference type="PROSITE-ProRule" id="PRU00978"/>
    </source>
</evidence>
<evidence type="ECO:0000256" key="3">
    <source>
        <dbReference type="SAM" id="MobiDB-lite"/>
    </source>
</evidence>
<evidence type="ECO:0000305" key="4"/>
<sequence>MSCDMEKTMSSVDSLPATPASEVPVLTVSPADTSLNSADVKTQEVKPEEKKPAKKRKSWGQELPVPKTNLPPRKRAKTEDEKEQRRIERVLRNRAAAQTSRERKRLEMEKLENEKIQMEQQNQFLLQRLSQMEAENNRLSQQLAQLAAEVRGSRANTPMPGSPATASPTLTPTLFKQERDELPLERIPFPTPSLSDYSPTLKPSTLAESSDVAQHPAVSVAGLEGDGSALPLFDLGSDLKHHSTDDVAAPLSDDDFNRLFHGDSSVEPDSSVFEDGLAFDVLEGGDLSAFPFDSMVNFDSEPVTLEGIEMAHGLPDETTCKTSSVQPGFGASTTRCDGQGIAAGC</sequence>
<accession>Q1XGE2</accession>
<accession>Q2U743</accession>
<name>HAC1_ASPOR</name>
<dbReference type="EMBL" id="AB246349">
    <property type="protein sequence ID" value="BAE93063.1"/>
    <property type="molecule type" value="mRNA"/>
</dbReference>
<dbReference type="EMBL" id="BA000053">
    <property type="protein sequence ID" value="BAE62622.1"/>
    <property type="status" value="ALT_SEQ"/>
    <property type="molecule type" value="Genomic_DNA"/>
</dbReference>
<dbReference type="RefSeq" id="XP_001823755.2">
    <property type="nucleotide sequence ID" value="XM_001823703.2"/>
</dbReference>
<dbReference type="SMR" id="Q1XGE2"/>
<dbReference type="STRING" id="510516.Q1XGE2"/>
<dbReference type="Proteomes" id="UP000006564">
    <property type="component" value="Chromosome 5"/>
</dbReference>
<dbReference type="GO" id="GO:0005634">
    <property type="term" value="C:nucleus"/>
    <property type="evidence" value="ECO:0007669"/>
    <property type="project" value="UniProtKB-SubCell"/>
</dbReference>
<dbReference type="GO" id="GO:0003677">
    <property type="term" value="F:DNA binding"/>
    <property type="evidence" value="ECO:0007669"/>
    <property type="project" value="UniProtKB-KW"/>
</dbReference>
<dbReference type="GO" id="GO:0000981">
    <property type="term" value="F:DNA-binding transcription factor activity, RNA polymerase II-specific"/>
    <property type="evidence" value="ECO:0007669"/>
    <property type="project" value="InterPro"/>
</dbReference>
<dbReference type="GO" id="GO:0045944">
    <property type="term" value="P:positive regulation of transcription by RNA polymerase II"/>
    <property type="evidence" value="ECO:0007669"/>
    <property type="project" value="InterPro"/>
</dbReference>
<dbReference type="GO" id="GO:0006986">
    <property type="term" value="P:response to unfolded protein"/>
    <property type="evidence" value="ECO:0007669"/>
    <property type="project" value="UniProtKB-KW"/>
</dbReference>
<dbReference type="CDD" id="cd14710">
    <property type="entry name" value="bZIP_HAC1-like"/>
    <property type="match status" value="1"/>
</dbReference>
<dbReference type="FunFam" id="1.20.5.170:FF:000101">
    <property type="entry name" value="BZIP transcription factor HacA"/>
    <property type="match status" value="1"/>
</dbReference>
<dbReference type="Gene3D" id="1.20.5.170">
    <property type="match status" value="1"/>
</dbReference>
<dbReference type="InterPro" id="IPR004827">
    <property type="entry name" value="bZIP"/>
</dbReference>
<dbReference type="InterPro" id="IPR046347">
    <property type="entry name" value="bZIP_sf"/>
</dbReference>
<dbReference type="InterPro" id="IPR044280">
    <property type="entry name" value="Hac1/HY5"/>
</dbReference>
<dbReference type="PANTHER" id="PTHR46714">
    <property type="entry name" value="TRANSCRIPTIONAL ACTIVATOR HAC1"/>
    <property type="match status" value="1"/>
</dbReference>
<dbReference type="PANTHER" id="PTHR46714:SF6">
    <property type="entry name" value="TRANSCRIPTIONAL ACTIVATOR HAC1"/>
    <property type="match status" value="1"/>
</dbReference>
<dbReference type="Pfam" id="PF07716">
    <property type="entry name" value="bZIP_2"/>
    <property type="match status" value="1"/>
</dbReference>
<dbReference type="SMART" id="SM00338">
    <property type="entry name" value="BRLZ"/>
    <property type="match status" value="1"/>
</dbReference>
<dbReference type="SUPFAM" id="SSF57959">
    <property type="entry name" value="Leucine zipper domain"/>
    <property type="match status" value="1"/>
</dbReference>
<dbReference type="PROSITE" id="PS50217">
    <property type="entry name" value="BZIP"/>
    <property type="match status" value="1"/>
</dbReference>
<dbReference type="PROSITE" id="PS00036">
    <property type="entry name" value="BZIP_BASIC"/>
    <property type="match status" value="1"/>
</dbReference>
<keyword id="KW-0010">Activator</keyword>
<keyword id="KW-0025">Alternative splicing</keyword>
<keyword id="KW-0238">DNA-binding</keyword>
<keyword id="KW-0539">Nucleus</keyword>
<keyword id="KW-1185">Reference proteome</keyword>
<keyword id="KW-0804">Transcription</keyword>
<keyword id="KW-0805">Transcription regulation</keyword>
<keyword id="KW-0834">Unfolded protein response</keyword>
<reference key="1">
    <citation type="submission" date="2006-01" db="EMBL/GenBank/DDBJ databases">
        <title>Aspergillus oryzae hacA mRNA under the ER stress condition.</title>
        <authorList>
            <person name="Maruyama J."/>
            <person name="Nakajima K."/>
            <person name="Ohno A."/>
            <person name="Higuchi Y."/>
            <person name="Arioka M."/>
            <person name="Abe K."/>
            <person name="Kitamoto K."/>
        </authorList>
    </citation>
    <scope>NUCLEOTIDE SEQUENCE [MRNA] (ISOFORM I)</scope>
    <source>
        <strain>ATCC 42149 / RIB 40</strain>
    </source>
</reference>
<reference key="2">
    <citation type="journal article" date="2005" name="Nature">
        <title>Genome sequencing and analysis of Aspergillus oryzae.</title>
        <authorList>
            <person name="Machida M."/>
            <person name="Asai K."/>
            <person name="Sano M."/>
            <person name="Tanaka T."/>
            <person name="Kumagai T."/>
            <person name="Terai G."/>
            <person name="Kusumoto K."/>
            <person name="Arima T."/>
            <person name="Akita O."/>
            <person name="Kashiwagi Y."/>
            <person name="Abe K."/>
            <person name="Gomi K."/>
            <person name="Horiuchi H."/>
            <person name="Kitamoto K."/>
            <person name="Kobayashi T."/>
            <person name="Takeuchi M."/>
            <person name="Denning D.W."/>
            <person name="Galagan J.E."/>
            <person name="Nierman W.C."/>
            <person name="Yu J."/>
            <person name="Archer D.B."/>
            <person name="Bennett J.W."/>
            <person name="Bhatnagar D."/>
            <person name="Cleveland T.E."/>
            <person name="Fedorova N.D."/>
            <person name="Gotoh O."/>
            <person name="Horikawa H."/>
            <person name="Hosoyama A."/>
            <person name="Ichinomiya M."/>
            <person name="Igarashi R."/>
            <person name="Iwashita K."/>
            <person name="Juvvadi P.R."/>
            <person name="Kato M."/>
            <person name="Kato Y."/>
            <person name="Kin T."/>
            <person name="Kokubun A."/>
            <person name="Maeda H."/>
            <person name="Maeyama N."/>
            <person name="Maruyama J."/>
            <person name="Nagasaki H."/>
            <person name="Nakajima T."/>
            <person name="Oda K."/>
            <person name="Okada K."/>
            <person name="Paulsen I."/>
            <person name="Sakamoto K."/>
            <person name="Sawano T."/>
            <person name="Takahashi M."/>
            <person name="Takase K."/>
            <person name="Terabayashi Y."/>
            <person name="Wortman J.R."/>
            <person name="Yamada O."/>
            <person name="Yamagata Y."/>
            <person name="Anazawa H."/>
            <person name="Hata Y."/>
            <person name="Koide Y."/>
            <person name="Komori T."/>
            <person name="Koyama Y."/>
            <person name="Minetoki T."/>
            <person name="Suharnan S."/>
            <person name="Tanaka A."/>
            <person name="Isono K."/>
            <person name="Kuhara S."/>
            <person name="Ogasawara N."/>
            <person name="Kikuchi H."/>
        </authorList>
    </citation>
    <scope>NUCLEOTIDE SEQUENCE [LARGE SCALE GENOMIC DNA]</scope>
    <source>
        <strain>ATCC 42149 / RIB 40</strain>
    </source>
</reference>